<keyword id="KW-0104">Cadmium</keyword>
<keyword id="KW-0105">Cadmium resistance</keyword>
<keyword id="KW-0903">Direct protein sequencing</keyword>
<keyword id="KW-0408">Iron</keyword>
<keyword id="KW-0479">Metal-binding</keyword>
<organism>
    <name type="scientific">Hediste diversicolor</name>
    <name type="common">Sandworm</name>
    <name type="synonym">Nereis diversicolor</name>
    <dbReference type="NCBI Taxonomy" id="126592"/>
    <lineage>
        <taxon>Eukaryota</taxon>
        <taxon>Metazoa</taxon>
        <taxon>Spiralia</taxon>
        <taxon>Lophotrochozoa</taxon>
        <taxon>Annelida</taxon>
        <taxon>Polychaeta</taxon>
        <taxon>Errantia</taxon>
        <taxon>Phyllodocida</taxon>
        <taxon>Nereididae</taxon>
        <taxon>Hediste</taxon>
        <taxon>Hediste diversicolor species group</taxon>
    </lineage>
</organism>
<reference key="1">
    <citation type="journal article" date="2003" name="Neuroendocrinol. Lett.">
        <title>Antibacterial properties of hemerythrin of the sand worm Nereis diversicolor.</title>
        <authorList>
            <person name="Deloffre L."/>
            <person name="Salzet-Raveillon B."/>
            <person name="Vieau D."/>
            <person name="Andries J.-C."/>
            <person name="Salzet M."/>
        </authorList>
    </citation>
    <scope>NUCLEOTIDE SEQUENCE [MRNA]</scope>
    <scope>FUNCTION</scope>
    <scope>TISSUE SPECIFICITY</scope>
</reference>
<reference key="2">
    <citation type="journal article" date="1993" name="Eur. J. Biochem.">
        <title>Amino acid sequence of the small cadmium-binding protein (MP II) from Nereis diversicolor (annelida, polychaeta). Evidence for a myohemerythrin structure.</title>
        <authorList>
            <person name="Demuynck S."/>
            <person name="Li K.W."/>
            <person name="van der Schors R."/>
            <person name="Dhainaut-Courtois N."/>
        </authorList>
    </citation>
    <scope>PROTEIN SEQUENCE OF 2-120</scope>
</reference>
<reference key="3">
    <citation type="journal article" date="1991" name="C. R. Acad. Sci. III, Sci. Vie">
        <title>Homologies between hemerythrins of sipunculids and cadmium-binding metalloprotein (MP II) from a polychaete annelid, Nereis diversicolor.</title>
        <authorList>
            <person name="Demuynck S."/>
            <person name="Sautiere P."/>
            <person name="van Beeumen J."/>
            <person name="Dhainaut-Courtois N."/>
        </authorList>
    </citation>
    <scope>PROTEIN SEQUENCE OF 2-34</scope>
</reference>
<reference key="4">
    <citation type="journal article" date="1993" name="Cell. Mol. Biol.">
        <title>Detection of mRNA encoding an antibacterial-metalloprotein (MPII) by in situ hybridization with a cDNA probe generated by polymerase chain reaction in the worm Nereis diversicolor.</title>
        <authorList>
            <person name="Salzet-Raveillon B."/>
            <person name="Rentier-Delrue F."/>
            <person name="Dhainaut A."/>
        </authorList>
    </citation>
    <scope>NUCLEOTIDE SEQUENCE [MRNA] OF 7-79</scope>
</reference>
<protein>
    <recommendedName>
        <fullName>Hemerythrin</fullName>
    </recommendedName>
    <alternativeName>
        <fullName>MP II</fullName>
        <shortName>MPII</shortName>
    </alternativeName>
    <alternativeName>
        <fullName>Non-metallothionein cadmium-binding protein</fullName>
        <shortName>CD-BP</shortName>
    </alternativeName>
</protein>
<feature type="initiator methionine" description="Removed" evidence="3 4">
    <location>
        <position position="1"/>
    </location>
</feature>
<feature type="chain" id="PRO_0000191834" description="Hemerythrin">
    <location>
        <begin position="2"/>
        <end position="120"/>
    </location>
</feature>
<feature type="binding site" evidence="1">
    <location>
        <position position="26"/>
    </location>
    <ligand>
        <name>Fe cation</name>
        <dbReference type="ChEBI" id="CHEBI:24875"/>
        <label>1</label>
    </ligand>
</feature>
<feature type="binding site" evidence="1">
    <location>
        <position position="55"/>
    </location>
    <ligand>
        <name>Fe cation</name>
        <dbReference type="ChEBI" id="CHEBI:24875"/>
        <label>1</label>
    </ligand>
</feature>
<feature type="binding site" evidence="1">
    <location>
        <position position="59"/>
    </location>
    <ligand>
        <name>Fe cation</name>
        <dbReference type="ChEBI" id="CHEBI:24875"/>
        <label>1</label>
    </ligand>
</feature>
<feature type="binding site" evidence="1">
    <location>
        <position position="59"/>
    </location>
    <ligand>
        <name>Fe cation</name>
        <dbReference type="ChEBI" id="CHEBI:24875"/>
        <label>2</label>
    </ligand>
</feature>
<feature type="binding site" evidence="1">
    <location>
        <position position="75"/>
    </location>
    <ligand>
        <name>Fe cation</name>
        <dbReference type="ChEBI" id="CHEBI:24875"/>
        <label>2</label>
    </ligand>
</feature>
<feature type="binding site" evidence="1">
    <location>
        <position position="79"/>
    </location>
    <ligand>
        <name>Fe cation</name>
        <dbReference type="ChEBI" id="CHEBI:24875"/>
        <label>2</label>
    </ligand>
</feature>
<feature type="binding site" evidence="1">
    <location>
        <position position="108"/>
    </location>
    <ligand>
        <name>Fe cation</name>
        <dbReference type="ChEBI" id="CHEBI:24875"/>
        <label>2</label>
    </ligand>
</feature>
<feature type="binding site" evidence="1">
    <location>
        <position position="113"/>
    </location>
    <ligand>
        <name>Fe cation</name>
        <dbReference type="ChEBI" id="CHEBI:24875"/>
        <label>1</label>
    </ligand>
</feature>
<feature type="binding site" evidence="1">
    <location>
        <position position="113"/>
    </location>
    <ligand>
        <name>Fe cation</name>
        <dbReference type="ChEBI" id="CHEBI:24875"/>
        <label>2</label>
    </ligand>
</feature>
<feature type="sequence conflict" description="In Ref. 4; S57799." evidence="5" ref="4">
    <original>E</original>
    <variation>Q</variation>
    <location>
        <position position="7"/>
    </location>
</feature>
<feature type="sequence conflict" description="In Ref. 1." evidence="5" ref="1">
    <original>W</original>
    <variation>Q</variation>
    <location>
        <position position="11"/>
    </location>
</feature>
<feature type="sequence conflict" description="In Ref. 4; S57799." evidence="5" ref="4">
    <original>KQ</original>
    <variation>GK</variation>
    <location>
        <begin position="27"/>
        <end position="28"/>
    </location>
</feature>
<feature type="sequence conflict" description="In Ref. 2; AA sequence." evidence="5" ref="2">
    <original>D</original>
    <variation>G</variation>
    <location>
        <position position="43"/>
    </location>
</feature>
<feature type="sequence conflict" description="In Ref. 4; S57799." evidence="5" ref="4">
    <original>F</original>
    <variation>P</variation>
    <location>
        <position position="56"/>
    </location>
</feature>
<feature type="sequence conflict" description="In Ref. 1." evidence="5" ref="1">
    <original>D</original>
    <variation>E</variation>
    <location>
        <position position="58"/>
    </location>
</feature>
<feature type="sequence conflict" description="In Ref. 2; AA sequence." evidence="5" ref="2">
    <original>M</original>
    <variation>L</variation>
    <location>
        <position position="63"/>
    </location>
</feature>
<feature type="sequence conflict" description="In Ref. 2; AA sequence." evidence="5" ref="2">
    <original>G</original>
    <variation>A</variation>
    <location>
        <position position="67"/>
    </location>
</feature>
<feature type="sequence conflict" description="In Ref. 1." evidence="5" ref="1">
    <original>N</original>
    <variation>D</variation>
    <location>
        <position position="99"/>
    </location>
</feature>
<proteinExistence type="evidence at protein level"/>
<comment type="function">
    <text evidence="2">May act as a buffer to control the concentration and therefore the toxicity of cadmium. Also involved in defence towards bacteria growth by acting as an iron scavenger.</text>
</comment>
<comment type="tissue specificity">
    <text evidence="2">Expressed and produced in a hematopoietic center that floats freely in the coelomic fluid before being stored in a particular hemocyte type: the granulocyte type 1.</text>
</comment>
<comment type="similarity">
    <text evidence="5">Belongs to the hemerythrin family.</text>
</comment>
<evidence type="ECO:0000250" key="1">
    <source>
        <dbReference type="UniProtKB" id="P02244"/>
    </source>
</evidence>
<evidence type="ECO:0000269" key="2">
    <source>
    </source>
</evidence>
<evidence type="ECO:0000269" key="3">
    <source>
    </source>
</evidence>
<evidence type="ECO:0000269" key="4">
    <source>
    </source>
</evidence>
<evidence type="ECO:0000305" key="5"/>
<sequence>MGFEIPEPYKWDESFQVFYEKLDEEHKQIFNAIFALCGGNNADNLKSLVDVTANHFADEEAMMKASGSYGDFDSHKKKHEDFLAVIRGLGAPVPQDKINYAKEWLVNHIKGTDFGYKGKL</sequence>
<accession>P80255</accession>
<name>HEMT2_HEDDI</name>
<dbReference type="EMBL" id="S57799">
    <property type="status" value="NOT_ANNOTATED_CDS"/>
    <property type="molecule type" value="mRNA"/>
</dbReference>
<dbReference type="PIR" id="S38261">
    <property type="entry name" value="S38261"/>
</dbReference>
<dbReference type="SMR" id="P80255"/>
<dbReference type="GO" id="GO:0005506">
    <property type="term" value="F:iron ion binding"/>
    <property type="evidence" value="ECO:0007669"/>
    <property type="project" value="InterPro"/>
</dbReference>
<dbReference type="GO" id="GO:0046686">
    <property type="term" value="P:response to cadmium ion"/>
    <property type="evidence" value="ECO:0007669"/>
    <property type="project" value="UniProtKB-KW"/>
</dbReference>
<dbReference type="CDD" id="cd12107">
    <property type="entry name" value="Hemerythrin"/>
    <property type="match status" value="1"/>
</dbReference>
<dbReference type="Gene3D" id="1.20.120.50">
    <property type="entry name" value="Hemerythrin-like"/>
    <property type="match status" value="1"/>
</dbReference>
<dbReference type="InterPro" id="IPR002063">
    <property type="entry name" value="Haemerythrin"/>
</dbReference>
<dbReference type="InterPro" id="IPR016131">
    <property type="entry name" value="Haemerythrin_Fe_BS"/>
</dbReference>
<dbReference type="InterPro" id="IPR050669">
    <property type="entry name" value="Hemerythrin"/>
</dbReference>
<dbReference type="InterPro" id="IPR012312">
    <property type="entry name" value="Hemerythrin-like"/>
</dbReference>
<dbReference type="InterPro" id="IPR035938">
    <property type="entry name" value="Hemerythrin-like_sf"/>
</dbReference>
<dbReference type="InterPro" id="IPR012827">
    <property type="entry name" value="Hemerythrin_metal-bd"/>
</dbReference>
<dbReference type="NCBIfam" id="TIGR02481">
    <property type="entry name" value="hemeryth_dom"/>
    <property type="match status" value="1"/>
</dbReference>
<dbReference type="NCBIfam" id="TIGR00058">
    <property type="entry name" value="Hemerythrin"/>
    <property type="match status" value="1"/>
</dbReference>
<dbReference type="PANTHER" id="PTHR37164">
    <property type="entry name" value="BACTERIOHEMERYTHRIN"/>
    <property type="match status" value="1"/>
</dbReference>
<dbReference type="PANTHER" id="PTHR37164:SF1">
    <property type="entry name" value="BACTERIOHEMERYTHRIN"/>
    <property type="match status" value="1"/>
</dbReference>
<dbReference type="Pfam" id="PF01814">
    <property type="entry name" value="Hemerythrin"/>
    <property type="match status" value="1"/>
</dbReference>
<dbReference type="PIRSF" id="PIRSF002033">
    <property type="entry name" value="Hemerythrin"/>
    <property type="match status" value="1"/>
</dbReference>
<dbReference type="PRINTS" id="PR00186">
    <property type="entry name" value="HEMERYTHRIN"/>
</dbReference>
<dbReference type="SUPFAM" id="SSF47188">
    <property type="entry name" value="Hemerythrin-like"/>
    <property type="match status" value="1"/>
</dbReference>
<dbReference type="PROSITE" id="PS00550">
    <property type="entry name" value="HEMERYTHRINS"/>
    <property type="match status" value="1"/>
</dbReference>